<accession>A5F5U0</accession>
<accession>C3M471</accession>
<comment type="function">
    <text evidence="1">Isomerase that catalyzes the conversion of deoxy-ribose 1-phosphate (dRib-1-P) and ribose 1-phosphate (Rib-1-P) to deoxy-ribose 5-phosphate (dRib-5-P) and ribose 5-phosphate (Rib-5-P), respectively.</text>
</comment>
<comment type="catalytic activity">
    <reaction evidence="1">
        <text>2-deoxy-alpha-D-ribose 1-phosphate = 2-deoxy-D-ribose 5-phosphate</text>
        <dbReference type="Rhea" id="RHEA:27658"/>
        <dbReference type="ChEBI" id="CHEBI:57259"/>
        <dbReference type="ChEBI" id="CHEBI:62877"/>
        <dbReference type="EC" id="5.4.2.7"/>
    </reaction>
</comment>
<comment type="catalytic activity">
    <reaction evidence="1">
        <text>alpha-D-ribose 1-phosphate = D-ribose 5-phosphate</text>
        <dbReference type="Rhea" id="RHEA:18793"/>
        <dbReference type="ChEBI" id="CHEBI:57720"/>
        <dbReference type="ChEBI" id="CHEBI:78346"/>
        <dbReference type="EC" id="5.4.2.7"/>
    </reaction>
</comment>
<comment type="cofactor">
    <cofactor evidence="1">
        <name>Mn(2+)</name>
        <dbReference type="ChEBI" id="CHEBI:29035"/>
    </cofactor>
    <text evidence="1">Binds 2 manganese ions.</text>
</comment>
<comment type="pathway">
    <text evidence="1">Carbohydrate degradation; 2-deoxy-D-ribose 1-phosphate degradation; D-glyceraldehyde 3-phosphate and acetaldehyde from 2-deoxy-alpha-D-ribose 1-phosphate: step 1/2.</text>
</comment>
<comment type="subcellular location">
    <subcellularLocation>
        <location evidence="1">Cytoplasm</location>
    </subcellularLocation>
</comment>
<comment type="similarity">
    <text evidence="1">Belongs to the phosphopentomutase family.</text>
</comment>
<proteinExistence type="inferred from homology"/>
<keyword id="KW-0963">Cytoplasm</keyword>
<keyword id="KW-0413">Isomerase</keyword>
<keyword id="KW-0464">Manganese</keyword>
<keyword id="KW-0479">Metal-binding</keyword>
<name>DEOB_VIBC3</name>
<evidence type="ECO:0000255" key="1">
    <source>
        <dbReference type="HAMAP-Rule" id="MF_00740"/>
    </source>
</evidence>
<reference key="1">
    <citation type="submission" date="2007-03" db="EMBL/GenBank/DDBJ databases">
        <authorList>
            <person name="Heidelberg J."/>
        </authorList>
    </citation>
    <scope>NUCLEOTIDE SEQUENCE [LARGE SCALE GENOMIC DNA]</scope>
    <source>
        <strain>ATCC 39541 / Classical Ogawa 395 / O395</strain>
    </source>
</reference>
<reference key="2">
    <citation type="journal article" date="2008" name="PLoS ONE">
        <title>A recalibrated molecular clock and independent origins for the cholera pandemic clones.</title>
        <authorList>
            <person name="Feng L."/>
            <person name="Reeves P.R."/>
            <person name="Lan R."/>
            <person name="Ren Y."/>
            <person name="Gao C."/>
            <person name="Zhou Z."/>
            <person name="Ren Y."/>
            <person name="Cheng J."/>
            <person name="Wang W."/>
            <person name="Wang J."/>
            <person name="Qian W."/>
            <person name="Li D."/>
            <person name="Wang L."/>
        </authorList>
    </citation>
    <scope>NUCLEOTIDE SEQUENCE [LARGE SCALE GENOMIC DNA]</scope>
    <source>
        <strain>ATCC 39541 / Classical Ogawa 395 / O395</strain>
    </source>
</reference>
<sequence>MKRAFILVLDSFGIGATADAQAFGDVGSDTLGHIADQCAQGLADNAERKGALQLPNLSKLGLAMAHKESTGRFAPGLDERADIIGAYAHAAELSSGKDTPSGHWEIAGVPVLFEWGYFSDKQNSFPKELTDRILARAGLDGFLGNCHASGTQVLDDLGEEHMRTGKPIFYTSADSVFQIACHEETFGLARLLELCQIAREELADYNIGRVIARPFVGPGKGQFARTGNRRDLSVEPPSATVLQKLVEEKQGRVVSIGKIADIYAYCGITDKVKATGIPDLFEATLEQIKQAGDNTIVFTNFVDFDSAYGHRRDVAGYAAALEYFDKRLPEVLALMQEDDILILTADHGCDPTWPGTDHTREHIPVLVYGKKVAPGSLGRRDTFADIGQTLASYFGTSPMDYGKNFL</sequence>
<protein>
    <recommendedName>
        <fullName evidence="1">Phosphopentomutase</fullName>
        <ecNumber evidence="1">5.4.2.7</ecNumber>
    </recommendedName>
    <alternativeName>
        <fullName evidence="1">Phosphodeoxyribomutase</fullName>
    </alternativeName>
</protein>
<gene>
    <name evidence="1" type="primary">deoB</name>
    <name type="ordered locus">VC0395_A1927</name>
    <name type="ordered locus">VC395_2463</name>
</gene>
<organism>
    <name type="scientific">Vibrio cholerae serotype O1 (strain ATCC 39541 / Classical Ogawa 395 / O395)</name>
    <dbReference type="NCBI Taxonomy" id="345073"/>
    <lineage>
        <taxon>Bacteria</taxon>
        <taxon>Pseudomonadati</taxon>
        <taxon>Pseudomonadota</taxon>
        <taxon>Gammaproteobacteria</taxon>
        <taxon>Vibrionales</taxon>
        <taxon>Vibrionaceae</taxon>
        <taxon>Vibrio</taxon>
    </lineage>
</organism>
<dbReference type="EC" id="5.4.2.7" evidence="1"/>
<dbReference type="EMBL" id="CP000627">
    <property type="protein sequence ID" value="ABQ20731.1"/>
    <property type="molecule type" value="Genomic_DNA"/>
</dbReference>
<dbReference type="EMBL" id="CP001235">
    <property type="protein sequence ID" value="ACP10453.1"/>
    <property type="molecule type" value="Genomic_DNA"/>
</dbReference>
<dbReference type="RefSeq" id="WP_000816440.1">
    <property type="nucleotide sequence ID" value="NZ_JAACZH010000008.1"/>
</dbReference>
<dbReference type="SMR" id="A5F5U0"/>
<dbReference type="KEGG" id="vco:VC0395_A1927"/>
<dbReference type="KEGG" id="vcr:VC395_2463"/>
<dbReference type="PATRIC" id="fig|345073.21.peg.2367"/>
<dbReference type="eggNOG" id="COG1015">
    <property type="taxonomic scope" value="Bacteria"/>
</dbReference>
<dbReference type="HOGENOM" id="CLU_053861_0_0_6"/>
<dbReference type="OrthoDB" id="9769930at2"/>
<dbReference type="UniPathway" id="UPA00002">
    <property type="reaction ID" value="UER00467"/>
</dbReference>
<dbReference type="Proteomes" id="UP000000249">
    <property type="component" value="Chromosome 2"/>
</dbReference>
<dbReference type="GO" id="GO:0005829">
    <property type="term" value="C:cytosol"/>
    <property type="evidence" value="ECO:0007669"/>
    <property type="project" value="TreeGrafter"/>
</dbReference>
<dbReference type="GO" id="GO:0000287">
    <property type="term" value="F:magnesium ion binding"/>
    <property type="evidence" value="ECO:0007669"/>
    <property type="project" value="InterPro"/>
</dbReference>
<dbReference type="GO" id="GO:0030145">
    <property type="term" value="F:manganese ion binding"/>
    <property type="evidence" value="ECO:0007669"/>
    <property type="project" value="UniProtKB-UniRule"/>
</dbReference>
<dbReference type="GO" id="GO:0008973">
    <property type="term" value="F:phosphopentomutase activity"/>
    <property type="evidence" value="ECO:0007669"/>
    <property type="project" value="UniProtKB-UniRule"/>
</dbReference>
<dbReference type="GO" id="GO:0006018">
    <property type="term" value="P:2-deoxyribose 1-phosphate catabolic process"/>
    <property type="evidence" value="ECO:0007669"/>
    <property type="project" value="UniProtKB-UniRule"/>
</dbReference>
<dbReference type="GO" id="GO:0006015">
    <property type="term" value="P:5-phosphoribose 1-diphosphate biosynthetic process"/>
    <property type="evidence" value="ECO:0007669"/>
    <property type="project" value="UniProtKB-UniPathway"/>
</dbReference>
<dbReference type="GO" id="GO:0043094">
    <property type="term" value="P:metabolic compound salvage"/>
    <property type="evidence" value="ECO:0007669"/>
    <property type="project" value="InterPro"/>
</dbReference>
<dbReference type="GO" id="GO:0009117">
    <property type="term" value="P:nucleotide metabolic process"/>
    <property type="evidence" value="ECO:0007669"/>
    <property type="project" value="InterPro"/>
</dbReference>
<dbReference type="CDD" id="cd16009">
    <property type="entry name" value="PPM"/>
    <property type="match status" value="1"/>
</dbReference>
<dbReference type="FunFam" id="3.30.70.1250:FF:000001">
    <property type="entry name" value="Phosphopentomutase"/>
    <property type="match status" value="1"/>
</dbReference>
<dbReference type="Gene3D" id="3.40.720.10">
    <property type="entry name" value="Alkaline Phosphatase, subunit A"/>
    <property type="match status" value="1"/>
</dbReference>
<dbReference type="Gene3D" id="3.30.70.1250">
    <property type="entry name" value="Phosphopentomutase"/>
    <property type="match status" value="1"/>
</dbReference>
<dbReference type="HAMAP" id="MF_00740">
    <property type="entry name" value="Phosphopentomut"/>
    <property type="match status" value="1"/>
</dbReference>
<dbReference type="InterPro" id="IPR017850">
    <property type="entry name" value="Alkaline_phosphatase_core_sf"/>
</dbReference>
<dbReference type="InterPro" id="IPR010045">
    <property type="entry name" value="DeoB"/>
</dbReference>
<dbReference type="InterPro" id="IPR006124">
    <property type="entry name" value="Metalloenzyme"/>
</dbReference>
<dbReference type="InterPro" id="IPR024052">
    <property type="entry name" value="Phosphopentomutase_DeoB_cap_sf"/>
</dbReference>
<dbReference type="NCBIfam" id="TIGR01696">
    <property type="entry name" value="deoB"/>
    <property type="match status" value="1"/>
</dbReference>
<dbReference type="NCBIfam" id="NF003766">
    <property type="entry name" value="PRK05362.1"/>
    <property type="match status" value="1"/>
</dbReference>
<dbReference type="PANTHER" id="PTHR21110">
    <property type="entry name" value="PHOSPHOPENTOMUTASE"/>
    <property type="match status" value="1"/>
</dbReference>
<dbReference type="PANTHER" id="PTHR21110:SF0">
    <property type="entry name" value="PHOSPHOPENTOMUTASE"/>
    <property type="match status" value="1"/>
</dbReference>
<dbReference type="Pfam" id="PF01676">
    <property type="entry name" value="Metalloenzyme"/>
    <property type="match status" value="1"/>
</dbReference>
<dbReference type="PIRSF" id="PIRSF001491">
    <property type="entry name" value="Ppentomutase"/>
    <property type="match status" value="1"/>
</dbReference>
<dbReference type="SUPFAM" id="SSF53649">
    <property type="entry name" value="Alkaline phosphatase-like"/>
    <property type="match status" value="1"/>
</dbReference>
<dbReference type="SUPFAM" id="SSF143856">
    <property type="entry name" value="DeoB insert domain-like"/>
    <property type="match status" value="1"/>
</dbReference>
<feature type="chain" id="PRO_1000072812" description="Phosphopentomutase">
    <location>
        <begin position="1"/>
        <end position="406"/>
    </location>
</feature>
<feature type="binding site" evidence="1">
    <location>
        <position position="10"/>
    </location>
    <ligand>
        <name>Mn(2+)</name>
        <dbReference type="ChEBI" id="CHEBI:29035"/>
        <label>1</label>
    </ligand>
</feature>
<feature type="binding site" evidence="1">
    <location>
        <position position="305"/>
    </location>
    <ligand>
        <name>Mn(2+)</name>
        <dbReference type="ChEBI" id="CHEBI:29035"/>
        <label>2</label>
    </ligand>
</feature>
<feature type="binding site" evidence="1">
    <location>
        <position position="310"/>
    </location>
    <ligand>
        <name>Mn(2+)</name>
        <dbReference type="ChEBI" id="CHEBI:29035"/>
        <label>2</label>
    </ligand>
</feature>
<feature type="binding site" evidence="1">
    <location>
        <position position="346"/>
    </location>
    <ligand>
        <name>Mn(2+)</name>
        <dbReference type="ChEBI" id="CHEBI:29035"/>
        <label>1</label>
    </ligand>
</feature>
<feature type="binding site" evidence="1">
    <location>
        <position position="347"/>
    </location>
    <ligand>
        <name>Mn(2+)</name>
        <dbReference type="ChEBI" id="CHEBI:29035"/>
        <label>1</label>
    </ligand>
</feature>
<feature type="binding site" evidence="1">
    <location>
        <position position="358"/>
    </location>
    <ligand>
        <name>Mn(2+)</name>
        <dbReference type="ChEBI" id="CHEBI:29035"/>
        <label>2</label>
    </ligand>
</feature>